<comment type="function">
    <text evidence="1">Has antibacterial activity against a variety of bacteria including S.aureus, P.aeruginosa and M.tuberculosis. Acts by inducing bacterial membrane breakage (By similarity).</text>
</comment>
<comment type="function">
    <text evidence="1">Induces production of reactive oxygen species (ROS) which are necessary for cell proliferation. May play a role in inducing oxidative DNA damage and replicative senescence. May play a role in the coordination of mitochondrial morphology and cell proliferation (By similarity).</text>
</comment>
<comment type="subcellular location">
    <subcellularLocation>
        <location evidence="1">Mitochondrion inner membrane</location>
        <topology evidence="1">Single-pass membrane protein</topology>
    </subcellularLocation>
</comment>
<comment type="similarity">
    <text evidence="3">Belongs to the MGR2 family.</text>
</comment>
<sequence>MPVSVGSYGQQAQPSCFDRVKMGFMMGFAVGMAAGAMFGTFSCLRIGMRGRELMGGVGKTMMQSGGTFGTFMAIGMGIRC</sequence>
<accession>Q6NYD1</accession>
<keyword id="KW-0044">Antibiotic</keyword>
<keyword id="KW-0929">Antimicrobial</keyword>
<keyword id="KW-0472">Membrane</keyword>
<keyword id="KW-0496">Mitochondrion</keyword>
<keyword id="KW-0999">Mitochondrion inner membrane</keyword>
<keyword id="KW-1185">Reference proteome</keyword>
<keyword id="KW-0812">Transmembrane</keyword>
<keyword id="KW-1133">Transmembrane helix</keyword>
<evidence type="ECO:0000250" key="1"/>
<evidence type="ECO:0000255" key="2"/>
<evidence type="ECO:0000305" key="3"/>
<reference key="1">
    <citation type="submission" date="2004-02" db="EMBL/GenBank/DDBJ databases">
        <authorList>
            <consortium name="NIH - Zebrafish Gene Collection (ZGC) project"/>
        </authorList>
    </citation>
    <scope>NUCLEOTIDE SEQUENCE [LARGE SCALE MRNA]</scope>
    <source>
        <tissue>Eye</tissue>
        <tissue>Kidney</tissue>
    </source>
</reference>
<protein>
    <recommendedName>
        <fullName>Reactive oxygen species modulator 1</fullName>
        <shortName>ROS modulator 1</shortName>
    </recommendedName>
    <alternativeName>
        <fullName>Protein MGR2 homolog</fullName>
    </alternativeName>
</protein>
<organism>
    <name type="scientific">Danio rerio</name>
    <name type="common">Zebrafish</name>
    <name type="synonym">Brachydanio rerio</name>
    <dbReference type="NCBI Taxonomy" id="7955"/>
    <lineage>
        <taxon>Eukaryota</taxon>
        <taxon>Metazoa</taxon>
        <taxon>Chordata</taxon>
        <taxon>Craniata</taxon>
        <taxon>Vertebrata</taxon>
        <taxon>Euteleostomi</taxon>
        <taxon>Actinopterygii</taxon>
        <taxon>Neopterygii</taxon>
        <taxon>Teleostei</taxon>
        <taxon>Ostariophysi</taxon>
        <taxon>Cypriniformes</taxon>
        <taxon>Danionidae</taxon>
        <taxon>Danioninae</taxon>
        <taxon>Danio</taxon>
    </lineage>
</organism>
<name>ROMO1_DANRE</name>
<dbReference type="EMBL" id="BC059661">
    <property type="protein sequence ID" value="AAH59661.1"/>
    <property type="molecule type" value="mRNA"/>
</dbReference>
<dbReference type="EMBL" id="BC066639">
    <property type="protein sequence ID" value="AAH66639.1"/>
    <property type="molecule type" value="mRNA"/>
</dbReference>
<dbReference type="RefSeq" id="NP_957091.1">
    <property type="nucleotide sequence ID" value="NM_200797.4"/>
</dbReference>
<dbReference type="SMR" id="Q6NYD1"/>
<dbReference type="FunCoup" id="Q6NYD1">
    <property type="interactions" value="951"/>
</dbReference>
<dbReference type="STRING" id="7955.ENSDARP00000055509"/>
<dbReference type="PaxDb" id="7955-ENSDARP00000055509"/>
<dbReference type="Ensembl" id="ENSDART00000055510">
    <property type="protein sequence ID" value="ENSDARP00000055509"/>
    <property type="gene ID" value="ENSDARG00000038076"/>
</dbReference>
<dbReference type="GeneID" id="393770"/>
<dbReference type="KEGG" id="dre:393770"/>
<dbReference type="AGR" id="ZFIN:ZDB-GENE-040426-1768"/>
<dbReference type="CTD" id="140823"/>
<dbReference type="ZFIN" id="ZDB-GENE-040426-1768">
    <property type="gene designation" value="romo1"/>
</dbReference>
<dbReference type="eggNOG" id="KOG4096">
    <property type="taxonomic scope" value="Eukaryota"/>
</dbReference>
<dbReference type="HOGENOM" id="CLU_142435_2_0_1"/>
<dbReference type="InParanoid" id="Q6NYD1"/>
<dbReference type="OMA" id="SCWDRVK"/>
<dbReference type="OrthoDB" id="5409308at2759"/>
<dbReference type="PhylomeDB" id="Q6NYD1"/>
<dbReference type="TreeFam" id="TF300273"/>
<dbReference type="PRO" id="PR:Q6NYD1"/>
<dbReference type="Proteomes" id="UP000000437">
    <property type="component" value="Chromosome 6"/>
</dbReference>
<dbReference type="Bgee" id="ENSDARG00000038076">
    <property type="expression patterns" value="Expressed in swim bladder and 33 other cell types or tissues"/>
</dbReference>
<dbReference type="GO" id="GO:0005739">
    <property type="term" value="C:mitochondrion"/>
    <property type="evidence" value="ECO:0000250"/>
    <property type="project" value="UniProtKB"/>
</dbReference>
<dbReference type="GO" id="GO:0005744">
    <property type="term" value="C:TIM23 mitochondrial import inner membrane translocase complex"/>
    <property type="evidence" value="ECO:0000318"/>
    <property type="project" value="GO_Central"/>
</dbReference>
<dbReference type="GO" id="GO:0034614">
    <property type="term" value="P:cellular response to reactive oxygen species"/>
    <property type="evidence" value="ECO:0000250"/>
    <property type="project" value="UniProtKB"/>
</dbReference>
<dbReference type="GO" id="GO:0042742">
    <property type="term" value="P:defense response to bacterium"/>
    <property type="evidence" value="ECO:0007669"/>
    <property type="project" value="UniProtKB-KW"/>
</dbReference>
<dbReference type="GO" id="GO:2000379">
    <property type="term" value="P:positive regulation of reactive oxygen species metabolic process"/>
    <property type="evidence" value="ECO:0000250"/>
    <property type="project" value="UniProtKB"/>
</dbReference>
<dbReference type="GO" id="GO:0030150">
    <property type="term" value="P:protein import into mitochondrial matrix"/>
    <property type="evidence" value="ECO:0000318"/>
    <property type="project" value="GO_Central"/>
</dbReference>
<dbReference type="GO" id="GO:0045039">
    <property type="term" value="P:protein insertion into mitochondrial inner membrane"/>
    <property type="evidence" value="ECO:0000318"/>
    <property type="project" value="GO_Central"/>
</dbReference>
<dbReference type="GO" id="GO:0090399">
    <property type="term" value="P:replicative senescence"/>
    <property type="evidence" value="ECO:0000250"/>
    <property type="project" value="UniProtKB"/>
</dbReference>
<dbReference type="InterPro" id="IPR018450">
    <property type="entry name" value="Romo1/Mgr2"/>
</dbReference>
<dbReference type="PANTHER" id="PTHR28525">
    <property type="entry name" value="REACTIVE OXYGEN SPECIES MODULATOR 1"/>
    <property type="match status" value="1"/>
</dbReference>
<dbReference type="PANTHER" id="PTHR28525:SF1">
    <property type="entry name" value="REACTIVE OXYGEN SPECIES MODULATOR 1"/>
    <property type="match status" value="1"/>
</dbReference>
<dbReference type="Pfam" id="PF10247">
    <property type="entry name" value="Romo1"/>
    <property type="match status" value="1"/>
</dbReference>
<dbReference type="SMART" id="SM01378">
    <property type="entry name" value="Romo1"/>
    <property type="match status" value="1"/>
</dbReference>
<feature type="chain" id="PRO_0000294147" description="Reactive oxygen species modulator 1">
    <location>
        <begin position="1"/>
        <end position="80"/>
    </location>
</feature>
<feature type="transmembrane region" description="Helical" evidence="2">
    <location>
        <begin position="22"/>
        <end position="44"/>
    </location>
</feature>
<feature type="region of interest" description="Sufficient for antibacterial activity" evidence="1">
    <location>
        <begin position="42"/>
        <end position="60"/>
    </location>
</feature>
<proteinExistence type="inferred from homology"/>
<gene>
    <name type="primary">romo1</name>
    <name type="ORF">zgc:73345</name>
</gene>